<gene>
    <name type="primary">hisC</name>
    <name type="ordered locus">b2021</name>
    <name type="ordered locus">JW2003</name>
</gene>
<protein>
    <recommendedName>
        <fullName>Histidinol-phosphate aminotransferase</fullName>
        <ecNumber>2.6.1.9</ecNumber>
    </recommendedName>
    <alternativeName>
        <fullName>Imidazole acetol-phosphate transaminase</fullName>
        <shortName>HPAT</shortName>
        <shortName>HspAT</shortName>
    </alternativeName>
</protein>
<sequence length="356" mass="39360">MSTVTITDLARENVRNLTPYQSARRLGGNGDVWLNANEYPTAVEFQLTQQTLNRYPECQPKAVIENYAQYAGVKPEQVLVSRGADEGIELLIRAFCEPGKDAILYCPPTYGMYSVSAETIGVECRTVPTLDNWQLDLQGISDKLDGVKVVYVCSPNNPTGQLINPQDFRTLLELTRGKAIVVADEAYIEFCPQASLAGWLAEYPHLAILRTLSKAFALAGLRCGFTLANEEVINLLMKVIAPYPLSTPVADIAAQALSPQGIVAMRERVAQIIAEREYLIAALKEIPCVEQVFDSETNYILARFKASSAVFKSLWDQGIILRDQNKQPSLSGCLRITVGTREESQRVIDALRAEQV</sequence>
<name>HIS8_ECOLI</name>
<accession>P06986</accession>
<dbReference type="EC" id="2.6.1.9"/>
<dbReference type="EMBL" id="X03416">
    <property type="protein sequence ID" value="CAA27150.1"/>
    <property type="molecule type" value="Genomic_DNA"/>
</dbReference>
<dbReference type="EMBL" id="X13462">
    <property type="protein sequence ID" value="CAA31813.1"/>
    <property type="molecule type" value="Genomic_DNA"/>
</dbReference>
<dbReference type="EMBL" id="U02071">
    <property type="protein sequence ID" value="AAA19743.1"/>
    <property type="molecule type" value="Unassigned_DNA"/>
</dbReference>
<dbReference type="EMBL" id="U00096">
    <property type="protein sequence ID" value="AAC75082.1"/>
    <property type="molecule type" value="Genomic_DNA"/>
</dbReference>
<dbReference type="EMBL" id="AP009048">
    <property type="protein sequence ID" value="BAA15852.1"/>
    <property type="molecule type" value="Genomic_DNA"/>
</dbReference>
<dbReference type="PIR" id="D64967">
    <property type="entry name" value="XNECHC"/>
</dbReference>
<dbReference type="RefSeq" id="NP_416525.1">
    <property type="nucleotide sequence ID" value="NC_000913.3"/>
</dbReference>
<dbReference type="RefSeq" id="WP_000108941.1">
    <property type="nucleotide sequence ID" value="NZ_SSTT01000011.1"/>
</dbReference>
<dbReference type="PDB" id="1FG3">
    <property type="method" value="X-ray"/>
    <property type="resolution" value="2.20 A"/>
    <property type="chains" value="A=1-356"/>
</dbReference>
<dbReference type="PDB" id="1FG7">
    <property type="method" value="X-ray"/>
    <property type="resolution" value="1.50 A"/>
    <property type="chains" value="A=1-356"/>
</dbReference>
<dbReference type="PDB" id="1GEW">
    <property type="method" value="X-ray"/>
    <property type="resolution" value="2.00 A"/>
    <property type="chains" value="A=1-356"/>
</dbReference>
<dbReference type="PDB" id="1GEX">
    <property type="method" value="X-ray"/>
    <property type="resolution" value="2.20 A"/>
    <property type="chains" value="A=1-356"/>
</dbReference>
<dbReference type="PDB" id="1GEY">
    <property type="method" value="X-ray"/>
    <property type="resolution" value="2.30 A"/>
    <property type="chains" value="A=1-356"/>
</dbReference>
<dbReference type="PDB" id="1IJI">
    <property type="method" value="X-ray"/>
    <property type="resolution" value="2.20 A"/>
    <property type="chains" value="A=1-356"/>
</dbReference>
<dbReference type="PDBsum" id="1FG3"/>
<dbReference type="PDBsum" id="1FG7"/>
<dbReference type="PDBsum" id="1GEW"/>
<dbReference type="PDBsum" id="1GEX"/>
<dbReference type="PDBsum" id="1GEY"/>
<dbReference type="PDBsum" id="1IJI"/>
<dbReference type="SMR" id="P06986"/>
<dbReference type="BioGRID" id="4260404">
    <property type="interactions" value="29"/>
</dbReference>
<dbReference type="DIP" id="DIP-9902N"/>
<dbReference type="FunCoup" id="P06986">
    <property type="interactions" value="693"/>
</dbReference>
<dbReference type="IntAct" id="P06986">
    <property type="interactions" value="5"/>
</dbReference>
<dbReference type="STRING" id="511145.b2021"/>
<dbReference type="DrugBank" id="DB03997">
    <property type="generic name" value="L-histidinol phosphate"/>
</dbReference>
<dbReference type="DrugBank" id="DB02142">
    <property type="generic name" value="Pyridoxamine-5'-Phosphate"/>
</dbReference>
<dbReference type="DrugBank" id="DB01813">
    <property type="generic name" value="Pyridoxyl-Glutamic Acid-5'-Monophosphate"/>
</dbReference>
<dbReference type="jPOST" id="P06986"/>
<dbReference type="PaxDb" id="511145-b2021"/>
<dbReference type="EnsemblBacteria" id="AAC75082">
    <property type="protein sequence ID" value="AAC75082"/>
    <property type="gene ID" value="b2021"/>
</dbReference>
<dbReference type="GeneID" id="946551"/>
<dbReference type="KEGG" id="ecj:JW2003"/>
<dbReference type="KEGG" id="eco:b2021"/>
<dbReference type="KEGG" id="ecoc:C3026_11395"/>
<dbReference type="PATRIC" id="fig|1411691.4.peg.231"/>
<dbReference type="EchoBASE" id="EB0441"/>
<dbReference type="eggNOG" id="COG0079">
    <property type="taxonomic scope" value="Bacteria"/>
</dbReference>
<dbReference type="HOGENOM" id="CLU_017584_3_1_6"/>
<dbReference type="InParanoid" id="P06986"/>
<dbReference type="OMA" id="NFVQFGR"/>
<dbReference type="OrthoDB" id="9813612at2"/>
<dbReference type="PhylomeDB" id="P06986"/>
<dbReference type="BioCyc" id="EcoCyc:HISTPHOSTRANS-MONOMER"/>
<dbReference type="BioCyc" id="MetaCyc:HISTPHOSTRANS-MONOMER"/>
<dbReference type="BRENDA" id="2.6.1.9">
    <property type="organism ID" value="2026"/>
</dbReference>
<dbReference type="UniPathway" id="UPA00031">
    <property type="reaction ID" value="UER00012"/>
</dbReference>
<dbReference type="EvolutionaryTrace" id="P06986"/>
<dbReference type="PRO" id="PR:P06986"/>
<dbReference type="Proteomes" id="UP000000625">
    <property type="component" value="Chromosome"/>
</dbReference>
<dbReference type="GO" id="GO:0005829">
    <property type="term" value="C:cytosol"/>
    <property type="evidence" value="ECO:0000314"/>
    <property type="project" value="EcoCyc"/>
</dbReference>
<dbReference type="GO" id="GO:0004400">
    <property type="term" value="F:histidinol-phosphate transaminase activity"/>
    <property type="evidence" value="ECO:0000314"/>
    <property type="project" value="EcoCyc"/>
</dbReference>
<dbReference type="GO" id="GO:0042802">
    <property type="term" value="F:identical protein binding"/>
    <property type="evidence" value="ECO:0000314"/>
    <property type="project" value="EcoCyc"/>
</dbReference>
<dbReference type="GO" id="GO:0030170">
    <property type="term" value="F:pyridoxal phosphate binding"/>
    <property type="evidence" value="ECO:0007669"/>
    <property type="project" value="InterPro"/>
</dbReference>
<dbReference type="GO" id="GO:0000105">
    <property type="term" value="P:L-histidine biosynthetic process"/>
    <property type="evidence" value="ECO:0000315"/>
    <property type="project" value="EcoCyc"/>
</dbReference>
<dbReference type="CDD" id="cd00609">
    <property type="entry name" value="AAT_like"/>
    <property type="match status" value="1"/>
</dbReference>
<dbReference type="FunFam" id="3.40.640.10:FF:000032">
    <property type="entry name" value="Histidinol-phosphate aminotransferase"/>
    <property type="match status" value="1"/>
</dbReference>
<dbReference type="FunFam" id="3.90.1150.10:FF:000042">
    <property type="entry name" value="Histidinol-phosphate aminotransferase"/>
    <property type="match status" value="1"/>
</dbReference>
<dbReference type="Gene3D" id="3.90.1150.10">
    <property type="entry name" value="Aspartate Aminotransferase, domain 1"/>
    <property type="match status" value="1"/>
</dbReference>
<dbReference type="Gene3D" id="3.40.640.10">
    <property type="entry name" value="Type I PLP-dependent aspartate aminotransferase-like (Major domain)"/>
    <property type="match status" value="1"/>
</dbReference>
<dbReference type="HAMAP" id="MF_01023">
    <property type="entry name" value="HisC_aminotrans_2"/>
    <property type="match status" value="1"/>
</dbReference>
<dbReference type="InterPro" id="IPR001917">
    <property type="entry name" value="Aminotrans_II_pyridoxalP_BS"/>
</dbReference>
<dbReference type="InterPro" id="IPR004839">
    <property type="entry name" value="Aminotransferase_I/II_large"/>
</dbReference>
<dbReference type="InterPro" id="IPR005861">
    <property type="entry name" value="HisP_aminotrans"/>
</dbReference>
<dbReference type="InterPro" id="IPR015424">
    <property type="entry name" value="PyrdxlP-dep_Trfase"/>
</dbReference>
<dbReference type="InterPro" id="IPR015421">
    <property type="entry name" value="PyrdxlP-dep_Trfase_major"/>
</dbReference>
<dbReference type="InterPro" id="IPR015422">
    <property type="entry name" value="PyrdxlP-dep_Trfase_small"/>
</dbReference>
<dbReference type="NCBIfam" id="TIGR01141">
    <property type="entry name" value="hisC"/>
    <property type="match status" value="1"/>
</dbReference>
<dbReference type="PANTHER" id="PTHR42885:SF2">
    <property type="entry name" value="HISTIDINOL-PHOSPHATE AMINOTRANSFERASE"/>
    <property type="match status" value="1"/>
</dbReference>
<dbReference type="PANTHER" id="PTHR42885">
    <property type="entry name" value="HISTIDINOL-PHOSPHATE AMINOTRANSFERASE-RELATED"/>
    <property type="match status" value="1"/>
</dbReference>
<dbReference type="Pfam" id="PF00155">
    <property type="entry name" value="Aminotran_1_2"/>
    <property type="match status" value="1"/>
</dbReference>
<dbReference type="SUPFAM" id="SSF53383">
    <property type="entry name" value="PLP-dependent transferases"/>
    <property type="match status" value="1"/>
</dbReference>
<dbReference type="PROSITE" id="PS00599">
    <property type="entry name" value="AA_TRANSFER_CLASS_2"/>
    <property type="match status" value="1"/>
</dbReference>
<comment type="catalytic activity">
    <reaction evidence="3">
        <text>L-histidinol phosphate + 2-oxoglutarate = 3-(imidazol-4-yl)-2-oxopropyl phosphate + L-glutamate</text>
        <dbReference type="Rhea" id="RHEA:23744"/>
        <dbReference type="ChEBI" id="CHEBI:16810"/>
        <dbReference type="ChEBI" id="CHEBI:29985"/>
        <dbReference type="ChEBI" id="CHEBI:57766"/>
        <dbReference type="ChEBI" id="CHEBI:57980"/>
        <dbReference type="EC" id="2.6.1.9"/>
    </reaction>
</comment>
<comment type="cofactor">
    <cofactor evidence="1 2">
        <name>pyridoxal 5'-phosphate</name>
        <dbReference type="ChEBI" id="CHEBI:597326"/>
    </cofactor>
</comment>
<comment type="pathway">
    <text evidence="3">Amino-acid biosynthesis; L-histidine biosynthesis; L-histidine from 5-phospho-alpha-D-ribose 1-diphosphate: step 7/9.</text>
</comment>
<comment type="subunit">
    <text evidence="1 2">Homodimer.</text>
</comment>
<comment type="similarity">
    <text evidence="4">Belongs to the class-II pyridoxal-phosphate-dependent aminotransferase family. Histidinol-phosphate aminotransferase subfamily.</text>
</comment>
<proteinExistence type="evidence at protein level"/>
<reference key="1">
    <citation type="journal article" date="1988" name="J. Mol. Biol.">
        <title>Structure and function of the Salmonella typhimurium and Escherichia coli K-12 histidine operons.</title>
        <authorList>
            <person name="Carlomagno M.S."/>
            <person name="Chiariotti L."/>
            <person name="Alifano P."/>
            <person name="Nappo A.G."/>
            <person name="Bruni C.B."/>
        </authorList>
    </citation>
    <scope>NUCLEOTIDE SEQUENCE [GENOMIC DNA]</scope>
    <source>
        <strain>K12</strain>
    </source>
</reference>
<reference key="2">
    <citation type="journal article" date="1985" name="J. Bacteriol.">
        <title>Cloning, structure, and expression of the Escherichia coli K-12 hisC gene.</title>
        <authorList>
            <person name="Grisolia V."/>
            <person name="Carlomagno M.S."/>
            <person name="Nappo A.G."/>
            <person name="Bruni C.B."/>
        </authorList>
    </citation>
    <scope>NUCLEOTIDE SEQUENCE [GENOMIC DNA]</scope>
    <scope>FUNCTION</scope>
    <scope>CATALYTIC ACTIVITY</scope>
    <scope>PATHWAY</scope>
    <source>
        <strain>K12</strain>
    </source>
</reference>
<reference key="3">
    <citation type="journal article" date="1994" name="J. Mol. Biol.">
        <title>Nucleotide sequence of the Escherichia coli K12 histidine operon revisited.</title>
        <authorList>
            <person name="Jovanovic G."/>
            <person name="Kostic T."/>
            <person name="Jankovic M."/>
            <person name="Savic D.J."/>
        </authorList>
    </citation>
    <scope>NUCLEOTIDE SEQUENCE [GENOMIC DNA]</scope>
    <scope>SEQUENCE REVISION</scope>
    <source>
        <strain>K12</strain>
    </source>
</reference>
<reference key="4">
    <citation type="journal article" date="1996" name="DNA Res.">
        <title>A 460-kb DNA sequence of the Escherichia coli K-12 genome corresponding to the 40.1-50.0 min region on the linkage map.</title>
        <authorList>
            <person name="Itoh T."/>
            <person name="Aiba H."/>
            <person name="Baba T."/>
            <person name="Fujita K."/>
            <person name="Hayashi K."/>
            <person name="Inada T."/>
            <person name="Isono K."/>
            <person name="Kasai H."/>
            <person name="Kimura S."/>
            <person name="Kitakawa M."/>
            <person name="Kitagawa M."/>
            <person name="Makino K."/>
            <person name="Miki T."/>
            <person name="Mizobuchi K."/>
            <person name="Mori H."/>
            <person name="Mori T."/>
            <person name="Motomura K."/>
            <person name="Nakade S."/>
            <person name="Nakamura Y."/>
            <person name="Nashimoto H."/>
            <person name="Nishio Y."/>
            <person name="Oshima T."/>
            <person name="Saito N."/>
            <person name="Sampei G."/>
            <person name="Seki Y."/>
            <person name="Sivasundaram S."/>
            <person name="Tagami H."/>
            <person name="Takeda J."/>
            <person name="Takemoto K."/>
            <person name="Wada C."/>
            <person name="Yamamoto Y."/>
            <person name="Horiuchi T."/>
        </authorList>
    </citation>
    <scope>NUCLEOTIDE SEQUENCE [LARGE SCALE GENOMIC DNA]</scope>
    <source>
        <strain>K12 / W3110 / ATCC 27325 / DSM 5911</strain>
    </source>
</reference>
<reference key="5">
    <citation type="journal article" date="1997" name="Science">
        <title>The complete genome sequence of Escherichia coli K-12.</title>
        <authorList>
            <person name="Blattner F.R."/>
            <person name="Plunkett G. III"/>
            <person name="Bloch C.A."/>
            <person name="Perna N.T."/>
            <person name="Burland V."/>
            <person name="Riley M."/>
            <person name="Collado-Vides J."/>
            <person name="Glasner J.D."/>
            <person name="Rode C.K."/>
            <person name="Mayhew G.F."/>
            <person name="Gregor J."/>
            <person name="Davis N.W."/>
            <person name="Kirkpatrick H.A."/>
            <person name="Goeden M.A."/>
            <person name="Rose D.J."/>
            <person name="Mau B."/>
            <person name="Shao Y."/>
        </authorList>
    </citation>
    <scope>NUCLEOTIDE SEQUENCE [LARGE SCALE GENOMIC DNA]</scope>
    <source>
        <strain>K12 / MG1655 / ATCC 47076</strain>
    </source>
</reference>
<reference key="6">
    <citation type="journal article" date="2006" name="Mol. Syst. Biol.">
        <title>Highly accurate genome sequences of Escherichia coli K-12 strains MG1655 and W3110.</title>
        <authorList>
            <person name="Hayashi K."/>
            <person name="Morooka N."/>
            <person name="Yamamoto Y."/>
            <person name="Fujita K."/>
            <person name="Isono K."/>
            <person name="Choi S."/>
            <person name="Ohtsubo E."/>
            <person name="Baba T."/>
            <person name="Wanner B.L."/>
            <person name="Mori H."/>
            <person name="Horiuchi T."/>
        </authorList>
    </citation>
    <scope>NUCLEOTIDE SEQUENCE [LARGE SCALE GENOMIC DNA]</scope>
    <source>
        <strain>K12 / W3110 / ATCC 27325 / DSM 5911</strain>
    </source>
</reference>
<reference key="7">
    <citation type="journal article" date="2001" name="J. Mol. Biol.">
        <title>Crystal structure of histidinol phosphate aminotransferase (HisC) from Escherichia coli, and its covalent complex with pyridoxal-5'-phosphate and L-histidinol phosphate.</title>
        <authorList>
            <person name="Sivaraman J."/>
            <person name="Li Y."/>
            <person name="Larocque R."/>
            <person name="Schrag J.D."/>
            <person name="Cygler M."/>
            <person name="Matte A."/>
        </authorList>
    </citation>
    <scope>X-RAY CRYSTALLOGRAPHY (1.5 ANGSTROMS)</scope>
    <scope>COFACTOR</scope>
    <scope>SUBUNIT</scope>
</reference>
<reference key="8">
    <citation type="journal article" date="2001" name="Biochemistry">
        <title>Structures of Escherichia coli histidinol-phosphate aminotransferase and its complexes with histidinol-phosphate and N-(5'-phosphopyridoxyl)-L-glutamate: double substrate recognition of the enzyme.</title>
        <authorList>
            <person name="Haruyama K."/>
            <person name="Nakai T."/>
            <person name="Miyahara I."/>
            <person name="Hirotsu K."/>
            <person name="Mizuguchi H."/>
            <person name="Hayashi H."/>
            <person name="Kagamiyama H."/>
        </authorList>
    </citation>
    <scope>X-RAY CRYSTALLOGRAPHY (2.0 ANGSTROMS) OF 5-351 IN COMPLEX WITH PYRIDOXAL 5'-PHOSPHATE; HISTIDINOL-PHOSPHATE AND N-(5'-PHOSPHOPYRIDOXYL)-L-GLUTAMATE</scope>
    <scope>COFACTOR</scope>
</reference>
<feature type="chain" id="PRO_0000153360" description="Histidinol-phosphate aminotransferase">
    <location>
        <begin position="1"/>
        <end position="356"/>
    </location>
</feature>
<feature type="modified residue" description="N6-(pyridoxal phosphate)lysine">
    <location>
        <position position="214"/>
    </location>
</feature>
<feature type="sequence conflict" description="In Ref. 1 and 2." evidence="4" ref="1 2">
    <original>L</original>
    <variation>P</variation>
    <location>
        <position position="130"/>
    </location>
</feature>
<feature type="sequence conflict" description="In Ref. 1 and 2." evidence="4" ref="1 2">
    <original>V</original>
    <variation>A</variation>
    <location>
        <position position="149"/>
    </location>
</feature>
<feature type="helix" evidence="5">
    <location>
        <begin position="6"/>
        <end position="9"/>
    </location>
</feature>
<feature type="helix" evidence="5">
    <location>
        <begin position="12"/>
        <end position="16"/>
    </location>
</feature>
<feature type="turn" evidence="5">
    <location>
        <begin position="27"/>
        <end position="29"/>
    </location>
</feature>
<feature type="strand" evidence="5">
    <location>
        <begin position="31"/>
        <end position="33"/>
    </location>
</feature>
<feature type="helix" evidence="5">
    <location>
        <begin position="61"/>
        <end position="71"/>
    </location>
</feature>
<feature type="helix" evidence="5">
    <location>
        <begin position="75"/>
        <end position="77"/>
    </location>
</feature>
<feature type="strand" evidence="5">
    <location>
        <begin position="78"/>
        <end position="82"/>
    </location>
</feature>
<feature type="helix" evidence="5">
    <location>
        <begin position="83"/>
        <end position="95"/>
    </location>
</feature>
<feature type="turn" evidence="5">
    <location>
        <begin position="98"/>
        <end position="100"/>
    </location>
</feature>
<feature type="strand" evidence="5">
    <location>
        <begin position="102"/>
        <end position="105"/>
    </location>
</feature>
<feature type="strand" evidence="5">
    <location>
        <begin position="107"/>
        <end position="109"/>
    </location>
</feature>
<feature type="helix" evidence="5">
    <location>
        <begin position="112"/>
        <end position="120"/>
    </location>
</feature>
<feature type="strand" evidence="5">
    <location>
        <begin position="123"/>
        <end position="126"/>
    </location>
</feature>
<feature type="helix" evidence="5">
    <location>
        <begin position="137"/>
        <end position="141"/>
    </location>
</feature>
<feature type="strand" evidence="5">
    <location>
        <begin position="147"/>
        <end position="155"/>
    </location>
</feature>
<feature type="turn" evidence="5">
    <location>
        <begin position="157"/>
        <end position="159"/>
    </location>
</feature>
<feature type="helix" evidence="5">
    <location>
        <begin position="165"/>
        <end position="175"/>
    </location>
</feature>
<feature type="turn" evidence="5">
    <location>
        <begin position="176"/>
        <end position="178"/>
    </location>
</feature>
<feature type="strand" evidence="5">
    <location>
        <begin position="180"/>
        <end position="184"/>
    </location>
</feature>
<feature type="helix" evidence="5">
    <location>
        <begin position="188"/>
        <end position="190"/>
    </location>
</feature>
<feature type="helix" evidence="5">
    <location>
        <begin position="192"/>
        <end position="194"/>
    </location>
</feature>
<feature type="helix" evidence="5">
    <location>
        <begin position="197"/>
        <end position="199"/>
    </location>
</feature>
<feature type="turn" evidence="5">
    <location>
        <begin position="200"/>
        <end position="202"/>
    </location>
</feature>
<feature type="strand" evidence="5">
    <location>
        <begin position="206"/>
        <end position="214"/>
    </location>
</feature>
<feature type="helix" evidence="5">
    <location>
        <begin position="219"/>
        <end position="221"/>
    </location>
</feature>
<feature type="strand" evidence="5">
    <location>
        <begin position="224"/>
        <end position="228"/>
    </location>
</feature>
<feature type="helix" evidence="5">
    <location>
        <begin position="230"/>
        <end position="239"/>
    </location>
</feature>
<feature type="helix" evidence="5">
    <location>
        <begin position="247"/>
        <end position="256"/>
    </location>
</feature>
<feature type="helix" evidence="5">
    <location>
        <begin position="259"/>
        <end position="285"/>
    </location>
</feature>
<feature type="strand" evidence="5">
    <location>
        <begin position="289"/>
        <end position="292"/>
    </location>
</feature>
<feature type="strand" evidence="5">
    <location>
        <begin position="296"/>
        <end position="304"/>
    </location>
</feature>
<feature type="helix" evidence="5">
    <location>
        <begin position="307"/>
        <end position="316"/>
    </location>
</feature>
<feature type="strand" evidence="5">
    <location>
        <begin position="333"/>
        <end position="337"/>
    </location>
</feature>
<feature type="helix" evidence="5">
    <location>
        <begin position="341"/>
        <end position="352"/>
    </location>
</feature>
<organism>
    <name type="scientific">Escherichia coli (strain K12)</name>
    <dbReference type="NCBI Taxonomy" id="83333"/>
    <lineage>
        <taxon>Bacteria</taxon>
        <taxon>Pseudomonadati</taxon>
        <taxon>Pseudomonadota</taxon>
        <taxon>Gammaproteobacteria</taxon>
        <taxon>Enterobacterales</taxon>
        <taxon>Enterobacteriaceae</taxon>
        <taxon>Escherichia</taxon>
    </lineage>
</organism>
<keyword id="KW-0002">3D-structure</keyword>
<keyword id="KW-0028">Amino-acid biosynthesis</keyword>
<keyword id="KW-0032">Aminotransferase</keyword>
<keyword id="KW-0368">Histidine biosynthesis</keyword>
<keyword id="KW-0663">Pyridoxal phosphate</keyword>
<keyword id="KW-1185">Reference proteome</keyword>
<keyword id="KW-0808">Transferase</keyword>
<evidence type="ECO:0000269" key="1">
    <source>
    </source>
</evidence>
<evidence type="ECO:0000269" key="2">
    <source>
    </source>
</evidence>
<evidence type="ECO:0000269" key="3">
    <source>
    </source>
</evidence>
<evidence type="ECO:0000305" key="4"/>
<evidence type="ECO:0007829" key="5">
    <source>
        <dbReference type="PDB" id="1FG7"/>
    </source>
</evidence>